<dbReference type="EC" id="2.6.1.42"/>
<dbReference type="EMBL" id="AE014075">
    <property type="protein sequence ID" value="AAN83124.1"/>
    <property type="molecule type" value="Genomic_DNA"/>
</dbReference>
<dbReference type="RefSeq" id="WP_000208520.1">
    <property type="nucleotide sequence ID" value="NZ_CP051263.1"/>
</dbReference>
<dbReference type="SMR" id="P0AB81"/>
<dbReference type="STRING" id="199310.c4692"/>
<dbReference type="GeneID" id="75204761"/>
<dbReference type="KEGG" id="ecc:c4692"/>
<dbReference type="eggNOG" id="COG0115">
    <property type="taxonomic scope" value="Bacteria"/>
</dbReference>
<dbReference type="HOGENOM" id="CLU_020844_3_1_6"/>
<dbReference type="BioCyc" id="ECOL199310:C4692-MONOMER"/>
<dbReference type="UniPathway" id="UPA00047">
    <property type="reaction ID" value="UER00058"/>
</dbReference>
<dbReference type="UniPathway" id="UPA00048">
    <property type="reaction ID" value="UER00073"/>
</dbReference>
<dbReference type="UniPathway" id="UPA00049">
    <property type="reaction ID" value="UER00062"/>
</dbReference>
<dbReference type="Proteomes" id="UP000001410">
    <property type="component" value="Chromosome"/>
</dbReference>
<dbReference type="GO" id="GO:0005829">
    <property type="term" value="C:cytosol"/>
    <property type="evidence" value="ECO:0007669"/>
    <property type="project" value="TreeGrafter"/>
</dbReference>
<dbReference type="GO" id="GO:0052656">
    <property type="term" value="F:L-isoleucine-2-oxoglutarate transaminase activity"/>
    <property type="evidence" value="ECO:0007669"/>
    <property type="project" value="RHEA"/>
</dbReference>
<dbReference type="GO" id="GO:0052654">
    <property type="term" value="F:L-leucine-2-oxoglutarate transaminase activity"/>
    <property type="evidence" value="ECO:0007669"/>
    <property type="project" value="RHEA"/>
</dbReference>
<dbReference type="GO" id="GO:0052655">
    <property type="term" value="F:L-valine-2-oxoglutarate transaminase activity"/>
    <property type="evidence" value="ECO:0007669"/>
    <property type="project" value="RHEA"/>
</dbReference>
<dbReference type="GO" id="GO:0006532">
    <property type="term" value="P:aspartate biosynthetic process"/>
    <property type="evidence" value="ECO:0007669"/>
    <property type="project" value="TreeGrafter"/>
</dbReference>
<dbReference type="GO" id="GO:0009097">
    <property type="term" value="P:isoleucine biosynthetic process"/>
    <property type="evidence" value="ECO:0007669"/>
    <property type="project" value="UniProtKB-UniPathway"/>
</dbReference>
<dbReference type="GO" id="GO:0009098">
    <property type="term" value="P:L-leucine biosynthetic process"/>
    <property type="evidence" value="ECO:0007669"/>
    <property type="project" value="UniProtKB-UniPathway"/>
</dbReference>
<dbReference type="GO" id="GO:0009099">
    <property type="term" value="P:L-valine biosynthetic process"/>
    <property type="evidence" value="ECO:0007669"/>
    <property type="project" value="UniProtKB-UniPathway"/>
</dbReference>
<dbReference type="CDD" id="cd01557">
    <property type="entry name" value="BCAT_beta_family"/>
    <property type="match status" value="1"/>
</dbReference>
<dbReference type="FunFam" id="3.20.10.10:FF:000001">
    <property type="entry name" value="Branched-chain-amino-acid aminotransferase"/>
    <property type="match status" value="1"/>
</dbReference>
<dbReference type="FunFam" id="3.30.470.10:FF:000001">
    <property type="entry name" value="Branched-chain-amino-acid aminotransferase"/>
    <property type="match status" value="1"/>
</dbReference>
<dbReference type="Gene3D" id="3.30.470.10">
    <property type="match status" value="1"/>
</dbReference>
<dbReference type="Gene3D" id="3.20.10.10">
    <property type="entry name" value="D-amino Acid Aminotransferase, subunit A, domain 2"/>
    <property type="match status" value="1"/>
</dbReference>
<dbReference type="InterPro" id="IPR001544">
    <property type="entry name" value="Aminotrans_IV"/>
</dbReference>
<dbReference type="InterPro" id="IPR018300">
    <property type="entry name" value="Aminotrans_IV_CS"/>
</dbReference>
<dbReference type="InterPro" id="IPR036038">
    <property type="entry name" value="Aminotransferase-like"/>
</dbReference>
<dbReference type="InterPro" id="IPR005785">
    <property type="entry name" value="B_amino_transI"/>
</dbReference>
<dbReference type="InterPro" id="IPR043132">
    <property type="entry name" value="BCAT-like_C"/>
</dbReference>
<dbReference type="InterPro" id="IPR043131">
    <property type="entry name" value="BCAT-like_N"/>
</dbReference>
<dbReference type="InterPro" id="IPR033939">
    <property type="entry name" value="BCAT_family"/>
</dbReference>
<dbReference type="InterPro" id="IPR050571">
    <property type="entry name" value="Class-IV_PLP-Dep_Aminotrnsfr"/>
</dbReference>
<dbReference type="NCBIfam" id="TIGR01122">
    <property type="entry name" value="ilvE_I"/>
    <property type="match status" value="1"/>
</dbReference>
<dbReference type="NCBIfam" id="NF005146">
    <property type="entry name" value="PRK06606.1"/>
    <property type="match status" value="1"/>
</dbReference>
<dbReference type="PANTHER" id="PTHR42743">
    <property type="entry name" value="AMINO-ACID AMINOTRANSFERASE"/>
    <property type="match status" value="1"/>
</dbReference>
<dbReference type="PANTHER" id="PTHR42743:SF11">
    <property type="entry name" value="AMINODEOXYCHORISMATE LYASE"/>
    <property type="match status" value="1"/>
</dbReference>
<dbReference type="Pfam" id="PF01063">
    <property type="entry name" value="Aminotran_4"/>
    <property type="match status" value="1"/>
</dbReference>
<dbReference type="SUPFAM" id="SSF56752">
    <property type="entry name" value="D-aminoacid aminotransferase-like PLP-dependent enzymes"/>
    <property type="match status" value="1"/>
</dbReference>
<dbReference type="PROSITE" id="PS00770">
    <property type="entry name" value="AA_TRANSFER_CLASS_4"/>
    <property type="match status" value="1"/>
</dbReference>
<organism>
    <name type="scientific">Escherichia coli O6:H1 (strain CFT073 / ATCC 700928 / UPEC)</name>
    <dbReference type="NCBI Taxonomy" id="199310"/>
    <lineage>
        <taxon>Bacteria</taxon>
        <taxon>Pseudomonadati</taxon>
        <taxon>Pseudomonadota</taxon>
        <taxon>Gammaproteobacteria</taxon>
        <taxon>Enterobacterales</taxon>
        <taxon>Enterobacteriaceae</taxon>
        <taxon>Escherichia</taxon>
    </lineage>
</organism>
<feature type="initiator methionine" description="Removed" evidence="1">
    <location>
        <position position="1"/>
    </location>
</feature>
<feature type="chain" id="PRO_0000103264" description="Branched-chain-amino-acid aminotransferase">
    <location>
        <begin position="2"/>
        <end position="309"/>
    </location>
</feature>
<feature type="modified residue" description="N6-(pyridoxal phosphate)lysine" evidence="1">
    <location>
        <position position="160"/>
    </location>
</feature>
<gene>
    <name type="primary">ilvE</name>
    <name type="ordered locus">c4692</name>
</gene>
<sequence>MTTKKADYIWFNGEMVRWEDAKVHVMSHALHYGTSVFEGIRCYDSHKGPVVFRHREHMQRLHDSAKIYRFPVSQSIDELMEACRDVIRKNNLTSAYIRPLIFVGDVGMGVNPPAGYSTDVIIAAFPWGAYLGAEALEQGIDAMVSSWNRAAPNTIPTAAKAGGNYLSSLLVGSEARRHGYQEGIALDVNGYISEGAGENLFEVKDGVLFTPPFTSSALPGITRDAIIKLAKELGIEVREQVLSRESLYLADEVFMSGTAAEITPVRSVDGIQVGEGRCGPVTKRIQQAFFGLFTGETEDKWGWLDQVNQ</sequence>
<protein>
    <recommendedName>
        <fullName>Branched-chain-amino-acid aminotransferase</fullName>
        <shortName>BCAT</shortName>
        <ecNumber>2.6.1.42</ecNumber>
    </recommendedName>
    <alternativeName>
        <fullName>Transaminase B</fullName>
    </alternativeName>
</protein>
<proteinExistence type="inferred from homology"/>
<name>ILVE_ECOL6</name>
<keyword id="KW-0028">Amino-acid biosynthesis</keyword>
<keyword id="KW-0032">Aminotransferase</keyword>
<keyword id="KW-0100">Branched-chain amino acid biosynthesis</keyword>
<keyword id="KW-0663">Pyridoxal phosphate</keyword>
<keyword id="KW-1185">Reference proteome</keyword>
<keyword id="KW-0808">Transferase</keyword>
<accession>P0AB81</accession>
<accession>P00510</accession>
<accession>Q47299</accession>
<evidence type="ECO:0000250" key="1"/>
<evidence type="ECO:0000305" key="2"/>
<comment type="function">
    <text evidence="1">Acts on leucine, isoleucine and valine.</text>
</comment>
<comment type="catalytic activity">
    <reaction>
        <text>L-leucine + 2-oxoglutarate = 4-methyl-2-oxopentanoate + L-glutamate</text>
        <dbReference type="Rhea" id="RHEA:18321"/>
        <dbReference type="ChEBI" id="CHEBI:16810"/>
        <dbReference type="ChEBI" id="CHEBI:17865"/>
        <dbReference type="ChEBI" id="CHEBI:29985"/>
        <dbReference type="ChEBI" id="CHEBI:57427"/>
        <dbReference type="EC" id="2.6.1.42"/>
    </reaction>
</comment>
<comment type="catalytic activity">
    <reaction>
        <text>L-isoleucine + 2-oxoglutarate = (S)-3-methyl-2-oxopentanoate + L-glutamate</text>
        <dbReference type="Rhea" id="RHEA:24801"/>
        <dbReference type="ChEBI" id="CHEBI:16810"/>
        <dbReference type="ChEBI" id="CHEBI:29985"/>
        <dbReference type="ChEBI" id="CHEBI:35146"/>
        <dbReference type="ChEBI" id="CHEBI:58045"/>
        <dbReference type="EC" id="2.6.1.42"/>
    </reaction>
</comment>
<comment type="catalytic activity">
    <reaction>
        <text>L-valine + 2-oxoglutarate = 3-methyl-2-oxobutanoate + L-glutamate</text>
        <dbReference type="Rhea" id="RHEA:24813"/>
        <dbReference type="ChEBI" id="CHEBI:11851"/>
        <dbReference type="ChEBI" id="CHEBI:16810"/>
        <dbReference type="ChEBI" id="CHEBI:29985"/>
        <dbReference type="ChEBI" id="CHEBI:57762"/>
        <dbReference type="EC" id="2.6.1.42"/>
    </reaction>
</comment>
<comment type="cofactor">
    <cofactor evidence="1">
        <name>pyridoxal 5'-phosphate</name>
        <dbReference type="ChEBI" id="CHEBI:597326"/>
    </cofactor>
</comment>
<comment type="pathway">
    <text>Amino-acid biosynthesis; L-isoleucine biosynthesis; L-isoleucine from 2-oxobutanoate: step 4/4.</text>
</comment>
<comment type="pathway">
    <text>Amino-acid biosynthesis; L-leucine biosynthesis; L-leucine from 3-methyl-2-oxobutanoate: step 4/4.</text>
</comment>
<comment type="pathway">
    <text>Amino-acid biosynthesis; L-valine biosynthesis; L-valine from pyruvate: step 4/4.</text>
</comment>
<comment type="subunit">
    <text evidence="1">Homohexamer.</text>
</comment>
<comment type="similarity">
    <text evidence="2">Belongs to the class-IV pyridoxal-phosphate-dependent aminotransferase family.</text>
</comment>
<reference key="1">
    <citation type="journal article" date="2002" name="Proc. Natl. Acad. Sci. U.S.A.">
        <title>Extensive mosaic structure revealed by the complete genome sequence of uropathogenic Escherichia coli.</title>
        <authorList>
            <person name="Welch R.A."/>
            <person name="Burland V."/>
            <person name="Plunkett G. III"/>
            <person name="Redford P."/>
            <person name="Roesch P."/>
            <person name="Rasko D."/>
            <person name="Buckles E.L."/>
            <person name="Liou S.-R."/>
            <person name="Boutin A."/>
            <person name="Hackett J."/>
            <person name="Stroud D."/>
            <person name="Mayhew G.F."/>
            <person name="Rose D.J."/>
            <person name="Zhou S."/>
            <person name="Schwartz D.C."/>
            <person name="Perna N.T."/>
            <person name="Mobley H.L.T."/>
            <person name="Donnenberg M.S."/>
            <person name="Blattner F.R."/>
        </authorList>
    </citation>
    <scope>NUCLEOTIDE SEQUENCE [LARGE SCALE GENOMIC DNA]</scope>
    <source>
        <strain>CFT073 / ATCC 700928 / UPEC</strain>
    </source>
</reference>